<protein>
    <recommendedName>
        <fullName evidence="1">Large ribosomal subunit protein bL31B</fullName>
    </recommendedName>
    <alternativeName>
        <fullName evidence="2">50S ribosomal protein L31 type B</fullName>
    </alternativeName>
</protein>
<accession>Q87MC5</accession>
<gene>
    <name evidence="1" type="primary">rpmE2</name>
    <name type="ordered locus">VP2331</name>
</gene>
<evidence type="ECO:0000255" key="1">
    <source>
        <dbReference type="HAMAP-Rule" id="MF_00502"/>
    </source>
</evidence>
<evidence type="ECO:0000305" key="2"/>
<organism>
    <name type="scientific">Vibrio parahaemolyticus serotype O3:K6 (strain RIMD 2210633)</name>
    <dbReference type="NCBI Taxonomy" id="223926"/>
    <lineage>
        <taxon>Bacteria</taxon>
        <taxon>Pseudomonadati</taxon>
        <taxon>Pseudomonadota</taxon>
        <taxon>Gammaproteobacteria</taxon>
        <taxon>Vibrionales</taxon>
        <taxon>Vibrionaceae</taxon>
        <taxon>Vibrio</taxon>
    </lineage>
</organism>
<name>RL31B_VIBPA</name>
<comment type="subunit">
    <text evidence="1">Part of the 50S ribosomal subunit.</text>
</comment>
<comment type="similarity">
    <text evidence="1">Belongs to the bacterial ribosomal protein bL31 family. Type B subfamily.</text>
</comment>
<reference key="1">
    <citation type="journal article" date="2003" name="Lancet">
        <title>Genome sequence of Vibrio parahaemolyticus: a pathogenic mechanism distinct from that of V. cholerae.</title>
        <authorList>
            <person name="Makino K."/>
            <person name="Oshima K."/>
            <person name="Kurokawa K."/>
            <person name="Yokoyama K."/>
            <person name="Uda T."/>
            <person name="Tagomori K."/>
            <person name="Iijima Y."/>
            <person name="Najima M."/>
            <person name="Nakano M."/>
            <person name="Yamashita A."/>
            <person name="Kubota Y."/>
            <person name="Kimura S."/>
            <person name="Yasunaga T."/>
            <person name="Honda T."/>
            <person name="Shinagawa H."/>
            <person name="Hattori M."/>
            <person name="Iida T."/>
        </authorList>
    </citation>
    <scope>NUCLEOTIDE SEQUENCE [LARGE SCALE GENOMIC DNA]</scope>
    <source>
        <strain>RIMD 2210633</strain>
    </source>
</reference>
<proteinExistence type="inferred from homology"/>
<feature type="chain" id="PRO_0000173281" description="Large ribosomal subunit protein bL31B">
    <location>
        <begin position="1"/>
        <end position="86"/>
    </location>
</feature>
<keyword id="KW-0687">Ribonucleoprotein</keyword>
<keyword id="KW-0689">Ribosomal protein</keyword>
<sequence length="86" mass="9995">MKPGIHPDYRPVVFHDTSVDEYFVVGSTLKTDRTIEWKDGKTYPYFTLDVSSSSHPFYTGKQRVVQAEGRIANFNRRFGQFTSEKE</sequence>
<dbReference type="EMBL" id="BA000031">
    <property type="protein sequence ID" value="BAC60594.1"/>
    <property type="molecule type" value="Genomic_DNA"/>
</dbReference>
<dbReference type="RefSeq" id="NP_798710.1">
    <property type="nucleotide sequence ID" value="NC_004603.1"/>
</dbReference>
<dbReference type="RefSeq" id="WP_005479047.1">
    <property type="nucleotide sequence ID" value="NC_004603.1"/>
</dbReference>
<dbReference type="SMR" id="Q87MC5"/>
<dbReference type="GeneID" id="1189844"/>
<dbReference type="KEGG" id="vpa:VP2331"/>
<dbReference type="PATRIC" id="fig|223926.6.peg.2234"/>
<dbReference type="eggNOG" id="COG0254">
    <property type="taxonomic scope" value="Bacteria"/>
</dbReference>
<dbReference type="HOGENOM" id="CLU_114306_2_2_6"/>
<dbReference type="Proteomes" id="UP000002493">
    <property type="component" value="Chromosome 1"/>
</dbReference>
<dbReference type="GO" id="GO:1990904">
    <property type="term" value="C:ribonucleoprotein complex"/>
    <property type="evidence" value="ECO:0007669"/>
    <property type="project" value="UniProtKB-KW"/>
</dbReference>
<dbReference type="GO" id="GO:0005840">
    <property type="term" value="C:ribosome"/>
    <property type="evidence" value="ECO:0007669"/>
    <property type="project" value="UniProtKB-KW"/>
</dbReference>
<dbReference type="GO" id="GO:0003735">
    <property type="term" value="F:structural constituent of ribosome"/>
    <property type="evidence" value="ECO:0007669"/>
    <property type="project" value="InterPro"/>
</dbReference>
<dbReference type="GO" id="GO:0006412">
    <property type="term" value="P:translation"/>
    <property type="evidence" value="ECO:0007669"/>
    <property type="project" value="UniProtKB-UniRule"/>
</dbReference>
<dbReference type="Gene3D" id="4.10.830.30">
    <property type="entry name" value="Ribosomal protein L31"/>
    <property type="match status" value="1"/>
</dbReference>
<dbReference type="HAMAP" id="MF_00502">
    <property type="entry name" value="Ribosomal_bL31_2"/>
    <property type="match status" value="1"/>
</dbReference>
<dbReference type="InterPro" id="IPR034704">
    <property type="entry name" value="Ribosomal_bL28/bL31-like_sf"/>
</dbReference>
<dbReference type="InterPro" id="IPR002150">
    <property type="entry name" value="Ribosomal_bL31"/>
</dbReference>
<dbReference type="InterPro" id="IPR027493">
    <property type="entry name" value="Ribosomal_bL31_B"/>
</dbReference>
<dbReference type="InterPro" id="IPR042105">
    <property type="entry name" value="Ribosomal_bL31_sf"/>
</dbReference>
<dbReference type="NCBIfam" id="TIGR00105">
    <property type="entry name" value="L31"/>
    <property type="match status" value="1"/>
</dbReference>
<dbReference type="NCBIfam" id="NF002462">
    <property type="entry name" value="PRK01678.1"/>
    <property type="match status" value="1"/>
</dbReference>
<dbReference type="PANTHER" id="PTHR33280">
    <property type="entry name" value="50S RIBOSOMAL PROTEIN L31, CHLOROPLASTIC"/>
    <property type="match status" value="1"/>
</dbReference>
<dbReference type="PANTHER" id="PTHR33280:SF1">
    <property type="entry name" value="LARGE RIBOSOMAL SUBUNIT PROTEIN BL31C"/>
    <property type="match status" value="1"/>
</dbReference>
<dbReference type="Pfam" id="PF01197">
    <property type="entry name" value="Ribosomal_L31"/>
    <property type="match status" value="1"/>
</dbReference>
<dbReference type="PRINTS" id="PR01249">
    <property type="entry name" value="RIBOSOMALL31"/>
</dbReference>
<dbReference type="SUPFAM" id="SSF143800">
    <property type="entry name" value="L28p-like"/>
    <property type="match status" value="1"/>
</dbReference>
<dbReference type="PROSITE" id="PS01143">
    <property type="entry name" value="RIBOSOMAL_L31"/>
    <property type="match status" value="1"/>
</dbReference>